<keyword id="KW-0150">Chloroplast</keyword>
<keyword id="KW-0903">Direct protein sequencing</keyword>
<keyword id="KW-0934">Plastid</keyword>
<keyword id="KW-1185">Reference proteome</keyword>
<keyword id="KW-0809">Transit peptide</keyword>
<feature type="transit peptide" description="Chloroplast" evidence="1">
    <location>
        <begin position="1"/>
        <end position="59"/>
    </location>
</feature>
<feature type="chain" id="PRO_0000023206" description="Plastid lipid-associated protein 2, chloroplastic">
    <location>
        <begin position="60"/>
        <end position="319"/>
    </location>
</feature>
<feature type="region of interest" description="Disordered" evidence="2">
    <location>
        <begin position="17"/>
        <end position="39"/>
    </location>
</feature>
<feature type="compositionally biased region" description="Low complexity" evidence="2">
    <location>
        <begin position="18"/>
        <end position="36"/>
    </location>
</feature>
<feature type="sequence conflict" description="In Ref. 1; AAK57562." evidence="4" ref="1">
    <original>QF</original>
    <variation>HS</variation>
    <location>
        <begin position="5"/>
        <end position="6"/>
    </location>
</feature>
<feature type="sequence conflict" description="In Ref. 1; AAK57562." evidence="4" ref="1">
    <original>SSA</original>
    <variation>CPS</variation>
    <location>
        <begin position="18"/>
        <end position="20"/>
    </location>
</feature>
<feature type="sequence conflict" description="In Ref. 1; AAK57562." evidence="4" ref="1">
    <original>P</original>
    <variation>S</variation>
    <location>
        <position position="45"/>
    </location>
</feature>
<comment type="function">
    <text>May stabilize the accumulated carotenoid structures.</text>
</comment>
<comment type="subcellular location">
    <subcellularLocation>
        <location>Plastid</location>
        <location>Chloroplast</location>
    </subcellularLocation>
</comment>
<comment type="tissue specificity">
    <text evidence="3">Expressed almost exclusively in petals. Very weak expression in all other organs.</text>
</comment>
<comment type="induction">
    <text>Down-regulated by drought and oxidative stresses. Up-regulated by wounding.</text>
</comment>
<comment type="similarity">
    <text evidence="4">Belongs to the PAP/fibrillin family.</text>
</comment>
<evidence type="ECO:0000255" key="1"/>
<evidence type="ECO:0000256" key="2">
    <source>
        <dbReference type="SAM" id="MobiDB-lite"/>
    </source>
</evidence>
<evidence type="ECO:0000269" key="3">
    <source>
    </source>
</evidence>
<evidence type="ECO:0000305" key="4"/>
<sequence length="319" mass="34615">MATVQFFNQFPCKTRVQSSANSKPLSKPPSSLVPMSALTRRPSFPPGEFAVSRSDFRVRVIDAEDELDPETSEGGGSALLMAEEAIESVEETEVLKRSLVDSLYGTDRGLSASSETRAEIGDLITQLESKNPTPAPTDALFLLNGKWILAYTSFVGLFPLLSRGIVPLVKVDEISQTIDSDNFTVENSVLFAGPLATTSISTNAKFEIRSPKRVQIKFEEGVIGTPQLTDSIEIPEYVEFLGQKIDLTPIRGLLTSVQDTATSVARTISSQPPLKFSLPGDSAQSWLLTTYLDKDIRISRGDGGSVFVLIKEGSPLLNP</sequence>
<protein>
    <recommendedName>
        <fullName>Plastid lipid-associated protein 2, chloroplastic</fullName>
    </recommendedName>
</protein>
<dbReference type="EMBL" id="AF290567">
    <property type="protein sequence ID" value="AAK57565.1"/>
    <property type="molecule type" value="Genomic_DNA"/>
</dbReference>
<dbReference type="EMBL" id="AF290564">
    <property type="protein sequence ID" value="AAK57562.1"/>
    <property type="molecule type" value="mRNA"/>
</dbReference>
<dbReference type="SMR" id="Q94KU6"/>
<dbReference type="Proteomes" id="UP000011750">
    <property type="component" value="Unplaced"/>
</dbReference>
<dbReference type="GO" id="GO:0009507">
    <property type="term" value="C:chloroplast"/>
    <property type="evidence" value="ECO:0007669"/>
    <property type="project" value="UniProtKB-SubCell"/>
</dbReference>
<dbReference type="InterPro" id="IPR039633">
    <property type="entry name" value="PAP"/>
</dbReference>
<dbReference type="InterPro" id="IPR006843">
    <property type="entry name" value="PAP/fibrillin_dom"/>
</dbReference>
<dbReference type="PANTHER" id="PTHR31906">
    <property type="entry name" value="PLASTID-LIPID-ASSOCIATED PROTEIN 4, CHLOROPLASTIC-RELATED"/>
    <property type="match status" value="1"/>
</dbReference>
<dbReference type="Pfam" id="PF04755">
    <property type="entry name" value="PAP_fibrillin"/>
    <property type="match status" value="1"/>
</dbReference>
<organism>
    <name type="scientific">Brassica campestris</name>
    <name type="common">Field mustard</name>
    <dbReference type="NCBI Taxonomy" id="3711"/>
    <lineage>
        <taxon>Eukaryota</taxon>
        <taxon>Viridiplantae</taxon>
        <taxon>Streptophyta</taxon>
        <taxon>Embryophyta</taxon>
        <taxon>Tracheophyta</taxon>
        <taxon>Spermatophyta</taxon>
        <taxon>Magnoliopsida</taxon>
        <taxon>eudicotyledons</taxon>
        <taxon>Gunneridae</taxon>
        <taxon>Pentapetalae</taxon>
        <taxon>rosids</taxon>
        <taxon>malvids</taxon>
        <taxon>Brassicales</taxon>
        <taxon>Brassicaceae</taxon>
        <taxon>Brassiceae</taxon>
        <taxon>Brassica</taxon>
    </lineage>
</organism>
<name>PAP2_BRACM</name>
<gene>
    <name type="primary">PAP2</name>
</gene>
<proteinExistence type="evidence at protein level"/>
<accession>Q94KU6</accession>
<accession>Q94KU8</accession>
<reference key="1">
    <citation type="journal article" date="2001" name="Plant Physiol.">
        <title>Brassica rapa has three genes that encode proteins associated with different neutral lipids in plastids of specific tissues.</title>
        <authorList>
            <person name="Kim H.U."/>
            <person name="Wu S.S.H."/>
            <person name="Ratnayake C."/>
            <person name="Huang A.H.C."/>
        </authorList>
    </citation>
    <scope>NUCLEOTIDE SEQUENCE [GENOMIC DNA / MRNA]</scope>
    <scope>PROTEIN SEQUENCE OF 60-70</scope>
    <scope>TISSUE SPECIFICITY</scope>
</reference>